<dbReference type="EC" id="2.7.1.23" evidence="1"/>
<dbReference type="EMBL" id="AP008934">
    <property type="protein sequence ID" value="BAE18923.1"/>
    <property type="molecule type" value="Genomic_DNA"/>
</dbReference>
<dbReference type="RefSeq" id="WP_011303480.1">
    <property type="nucleotide sequence ID" value="NZ_MTGA01000039.1"/>
</dbReference>
<dbReference type="SMR" id="Q49WD6"/>
<dbReference type="GeneID" id="3615405"/>
<dbReference type="KEGG" id="ssp:SSP1778"/>
<dbReference type="PATRIC" id="fig|342451.11.peg.1774"/>
<dbReference type="eggNOG" id="COG0061">
    <property type="taxonomic scope" value="Bacteria"/>
</dbReference>
<dbReference type="HOGENOM" id="CLU_008831_0_3_9"/>
<dbReference type="OrthoDB" id="9774737at2"/>
<dbReference type="Proteomes" id="UP000006371">
    <property type="component" value="Chromosome"/>
</dbReference>
<dbReference type="GO" id="GO:0005737">
    <property type="term" value="C:cytoplasm"/>
    <property type="evidence" value="ECO:0007669"/>
    <property type="project" value="UniProtKB-SubCell"/>
</dbReference>
<dbReference type="GO" id="GO:0005524">
    <property type="term" value="F:ATP binding"/>
    <property type="evidence" value="ECO:0007669"/>
    <property type="project" value="UniProtKB-KW"/>
</dbReference>
<dbReference type="GO" id="GO:0046872">
    <property type="term" value="F:metal ion binding"/>
    <property type="evidence" value="ECO:0007669"/>
    <property type="project" value="UniProtKB-UniRule"/>
</dbReference>
<dbReference type="GO" id="GO:0051287">
    <property type="term" value="F:NAD binding"/>
    <property type="evidence" value="ECO:0007669"/>
    <property type="project" value="UniProtKB-ARBA"/>
</dbReference>
<dbReference type="GO" id="GO:0003951">
    <property type="term" value="F:NAD+ kinase activity"/>
    <property type="evidence" value="ECO:0007669"/>
    <property type="project" value="UniProtKB-UniRule"/>
</dbReference>
<dbReference type="GO" id="GO:0019674">
    <property type="term" value="P:NAD metabolic process"/>
    <property type="evidence" value="ECO:0007669"/>
    <property type="project" value="InterPro"/>
</dbReference>
<dbReference type="GO" id="GO:0006741">
    <property type="term" value="P:NADP biosynthetic process"/>
    <property type="evidence" value="ECO:0007669"/>
    <property type="project" value="UniProtKB-UniRule"/>
</dbReference>
<dbReference type="FunFam" id="2.60.200.30:FF:000002">
    <property type="entry name" value="NAD kinase"/>
    <property type="match status" value="1"/>
</dbReference>
<dbReference type="Gene3D" id="3.40.50.10330">
    <property type="entry name" value="Probable inorganic polyphosphate/atp-NAD kinase, domain 1"/>
    <property type="match status" value="1"/>
</dbReference>
<dbReference type="Gene3D" id="2.60.200.30">
    <property type="entry name" value="Probable inorganic polyphosphate/atp-NAD kinase, domain 2"/>
    <property type="match status" value="1"/>
</dbReference>
<dbReference type="HAMAP" id="MF_00361">
    <property type="entry name" value="NAD_kinase"/>
    <property type="match status" value="1"/>
</dbReference>
<dbReference type="InterPro" id="IPR017438">
    <property type="entry name" value="ATP-NAD_kinase_N"/>
</dbReference>
<dbReference type="InterPro" id="IPR017437">
    <property type="entry name" value="ATP-NAD_kinase_PpnK-typ_C"/>
</dbReference>
<dbReference type="InterPro" id="IPR016064">
    <property type="entry name" value="NAD/diacylglycerol_kinase_sf"/>
</dbReference>
<dbReference type="InterPro" id="IPR002504">
    <property type="entry name" value="NADK"/>
</dbReference>
<dbReference type="NCBIfam" id="NF003424">
    <property type="entry name" value="PRK04885.1"/>
    <property type="match status" value="1"/>
</dbReference>
<dbReference type="PANTHER" id="PTHR20275">
    <property type="entry name" value="NAD KINASE"/>
    <property type="match status" value="1"/>
</dbReference>
<dbReference type="PANTHER" id="PTHR20275:SF0">
    <property type="entry name" value="NAD KINASE"/>
    <property type="match status" value="1"/>
</dbReference>
<dbReference type="Pfam" id="PF01513">
    <property type="entry name" value="NAD_kinase"/>
    <property type="match status" value="1"/>
</dbReference>
<dbReference type="Pfam" id="PF20143">
    <property type="entry name" value="NAD_kinase_C"/>
    <property type="match status" value="1"/>
</dbReference>
<dbReference type="SUPFAM" id="SSF111331">
    <property type="entry name" value="NAD kinase/diacylglycerol kinase-like"/>
    <property type="match status" value="1"/>
</dbReference>
<proteinExistence type="inferred from homology"/>
<protein>
    <recommendedName>
        <fullName evidence="1">NAD kinase</fullName>
        <ecNumber evidence="1">2.7.1.23</ecNumber>
    </recommendedName>
    <alternativeName>
        <fullName evidence="1">ATP-dependent NAD kinase</fullName>
    </alternativeName>
</protein>
<comment type="function">
    <text evidence="1">Involved in the regulation of the intracellular balance of NAD and NADP, and is a key enzyme in the biosynthesis of NADP. Catalyzes specifically the phosphorylation on 2'-hydroxyl of the adenosine moiety of NAD to yield NADP.</text>
</comment>
<comment type="catalytic activity">
    <reaction evidence="1">
        <text>NAD(+) + ATP = ADP + NADP(+) + H(+)</text>
        <dbReference type="Rhea" id="RHEA:18629"/>
        <dbReference type="ChEBI" id="CHEBI:15378"/>
        <dbReference type="ChEBI" id="CHEBI:30616"/>
        <dbReference type="ChEBI" id="CHEBI:57540"/>
        <dbReference type="ChEBI" id="CHEBI:58349"/>
        <dbReference type="ChEBI" id="CHEBI:456216"/>
        <dbReference type="EC" id="2.7.1.23"/>
    </reaction>
</comment>
<comment type="cofactor">
    <cofactor evidence="1">
        <name>a divalent metal cation</name>
        <dbReference type="ChEBI" id="CHEBI:60240"/>
    </cofactor>
</comment>
<comment type="subcellular location">
    <subcellularLocation>
        <location evidence="1">Cytoplasm</location>
    </subcellularLocation>
</comment>
<comment type="similarity">
    <text evidence="1">Belongs to the NAD kinase family.</text>
</comment>
<sequence length="269" mass="30457">MRYTILSKGDSKSNALKHKMINHMKDFQMVEDPDNPEIVISVGGDGTLLQAFHQYSYMLSRCAFVGIHTGHLGFYADWLPHEVEKLIIEINNSEFQVIEYPLLEIIVRYNDNGYETRHLALNEATMKTENGSTLVVDVNIRGNQFERFRGDGLCISTPSGSTAYNKALGGALIHPSLEAMQIAEIASINNRVFRTVGSPLVLPKHHTCLITPVNQDTILTTIDHVSIKHKNVNAIQYRVANEKIRFARFRPFPFWKRVHDSFISSGDDE</sequence>
<organism>
    <name type="scientific">Staphylococcus saprophyticus subsp. saprophyticus (strain ATCC 15305 / DSM 20229 / NCIMB 8711 / NCTC 7292 / S-41)</name>
    <dbReference type="NCBI Taxonomy" id="342451"/>
    <lineage>
        <taxon>Bacteria</taxon>
        <taxon>Bacillati</taxon>
        <taxon>Bacillota</taxon>
        <taxon>Bacilli</taxon>
        <taxon>Bacillales</taxon>
        <taxon>Staphylococcaceae</taxon>
        <taxon>Staphylococcus</taxon>
    </lineage>
</organism>
<name>NADK_STAS1</name>
<evidence type="ECO:0000255" key="1">
    <source>
        <dbReference type="HAMAP-Rule" id="MF_00361"/>
    </source>
</evidence>
<feature type="chain" id="PRO_0000120667" description="NAD kinase">
    <location>
        <begin position="1"/>
        <end position="269"/>
    </location>
</feature>
<feature type="active site" description="Proton acceptor" evidence="1">
    <location>
        <position position="45"/>
    </location>
</feature>
<feature type="binding site" evidence="1">
    <location>
        <begin position="45"/>
        <end position="46"/>
    </location>
    <ligand>
        <name>NAD(+)</name>
        <dbReference type="ChEBI" id="CHEBI:57540"/>
    </ligand>
</feature>
<feature type="binding site" evidence="1">
    <location>
        <begin position="122"/>
        <end position="123"/>
    </location>
    <ligand>
        <name>NAD(+)</name>
        <dbReference type="ChEBI" id="CHEBI:57540"/>
    </ligand>
</feature>
<feature type="binding site" evidence="1">
    <location>
        <position position="149"/>
    </location>
    <ligand>
        <name>NAD(+)</name>
        <dbReference type="ChEBI" id="CHEBI:57540"/>
    </ligand>
</feature>
<feature type="binding site" evidence="1">
    <location>
        <position position="151"/>
    </location>
    <ligand>
        <name>NAD(+)</name>
        <dbReference type="ChEBI" id="CHEBI:57540"/>
    </ligand>
</feature>
<feature type="binding site" evidence="1">
    <location>
        <position position="186"/>
    </location>
    <ligand>
        <name>NAD(+)</name>
        <dbReference type="ChEBI" id="CHEBI:57540"/>
    </ligand>
</feature>
<accession>Q49WD6</accession>
<gene>
    <name evidence="1" type="primary">nadK</name>
    <name type="ordered locus">SSP1778</name>
</gene>
<reference key="1">
    <citation type="journal article" date="2005" name="Proc. Natl. Acad. Sci. U.S.A.">
        <title>Whole genome sequence of Staphylococcus saprophyticus reveals the pathogenesis of uncomplicated urinary tract infection.</title>
        <authorList>
            <person name="Kuroda M."/>
            <person name="Yamashita A."/>
            <person name="Hirakawa H."/>
            <person name="Kumano M."/>
            <person name="Morikawa K."/>
            <person name="Higashide M."/>
            <person name="Maruyama A."/>
            <person name="Inose Y."/>
            <person name="Matoba K."/>
            <person name="Toh H."/>
            <person name="Kuhara S."/>
            <person name="Hattori M."/>
            <person name="Ohta T."/>
        </authorList>
    </citation>
    <scope>NUCLEOTIDE SEQUENCE [LARGE SCALE GENOMIC DNA]</scope>
    <source>
        <strain>ATCC 15305 / DSM 20229 / NCIMB 8711 / NCTC 7292 / S-41</strain>
    </source>
</reference>
<keyword id="KW-0067">ATP-binding</keyword>
<keyword id="KW-0963">Cytoplasm</keyword>
<keyword id="KW-0418">Kinase</keyword>
<keyword id="KW-0520">NAD</keyword>
<keyword id="KW-0521">NADP</keyword>
<keyword id="KW-0547">Nucleotide-binding</keyword>
<keyword id="KW-1185">Reference proteome</keyword>
<keyword id="KW-0808">Transferase</keyword>